<gene>
    <name evidence="1" type="primary">apt</name>
    <name type="ordered locus">VC_1053</name>
</gene>
<accession>Q9KT52</accession>
<organism>
    <name type="scientific">Vibrio cholerae serotype O1 (strain ATCC 39315 / El Tor Inaba N16961)</name>
    <dbReference type="NCBI Taxonomy" id="243277"/>
    <lineage>
        <taxon>Bacteria</taxon>
        <taxon>Pseudomonadati</taxon>
        <taxon>Pseudomonadota</taxon>
        <taxon>Gammaproteobacteria</taxon>
        <taxon>Vibrionales</taxon>
        <taxon>Vibrionaceae</taxon>
        <taxon>Vibrio</taxon>
    </lineage>
</organism>
<protein>
    <recommendedName>
        <fullName evidence="1">Adenine phosphoribosyltransferase</fullName>
        <shortName evidence="1">APRT</shortName>
        <ecNumber evidence="1">2.4.2.7</ecNumber>
    </recommendedName>
</protein>
<sequence>MTTETLSLIKSSIKSIPDYPKKGILFRDVTSLLEDAQAYQATIQLLVEKYKDMGFTKVVGTEARGFLFGAPLALELGVGFVPVRKPGKLPRQTVAQSYELEYGTDTLEIHVDAIKPGDKVLVVDDLLATGGTIEATTKLIRQLGGEVEHAAFVINLPEIGGDKRLEGLGLQVYSICEFEGH</sequence>
<name>APT_VIBCH</name>
<comment type="function">
    <text evidence="1">Catalyzes a salvage reaction resulting in the formation of AMP, that is energically less costly than de novo synthesis.</text>
</comment>
<comment type="catalytic activity">
    <reaction evidence="1">
        <text>AMP + diphosphate = 5-phospho-alpha-D-ribose 1-diphosphate + adenine</text>
        <dbReference type="Rhea" id="RHEA:16609"/>
        <dbReference type="ChEBI" id="CHEBI:16708"/>
        <dbReference type="ChEBI" id="CHEBI:33019"/>
        <dbReference type="ChEBI" id="CHEBI:58017"/>
        <dbReference type="ChEBI" id="CHEBI:456215"/>
        <dbReference type="EC" id="2.4.2.7"/>
    </reaction>
</comment>
<comment type="pathway">
    <text evidence="1">Purine metabolism; AMP biosynthesis via salvage pathway; AMP from adenine: step 1/1.</text>
</comment>
<comment type="subunit">
    <text evidence="1">Homodimer.</text>
</comment>
<comment type="subcellular location">
    <subcellularLocation>
        <location evidence="1">Cytoplasm</location>
    </subcellularLocation>
</comment>
<comment type="similarity">
    <text evidence="1">Belongs to the purine/pyrimidine phosphoribosyltransferase family.</text>
</comment>
<reference key="1">
    <citation type="journal article" date="2000" name="Nature">
        <title>DNA sequence of both chromosomes of the cholera pathogen Vibrio cholerae.</title>
        <authorList>
            <person name="Heidelberg J.F."/>
            <person name="Eisen J.A."/>
            <person name="Nelson W.C."/>
            <person name="Clayton R.A."/>
            <person name="Gwinn M.L."/>
            <person name="Dodson R.J."/>
            <person name="Haft D.H."/>
            <person name="Hickey E.K."/>
            <person name="Peterson J.D."/>
            <person name="Umayam L.A."/>
            <person name="Gill S.R."/>
            <person name="Nelson K.E."/>
            <person name="Read T.D."/>
            <person name="Tettelin H."/>
            <person name="Richardson D.L."/>
            <person name="Ermolaeva M.D."/>
            <person name="Vamathevan J.J."/>
            <person name="Bass S."/>
            <person name="Qin H."/>
            <person name="Dragoi I."/>
            <person name="Sellers P."/>
            <person name="McDonald L.A."/>
            <person name="Utterback T.R."/>
            <person name="Fleischmann R.D."/>
            <person name="Nierman W.C."/>
            <person name="White O."/>
            <person name="Salzberg S.L."/>
            <person name="Smith H.O."/>
            <person name="Colwell R.R."/>
            <person name="Mekalanos J.J."/>
            <person name="Venter J.C."/>
            <person name="Fraser C.M."/>
        </authorList>
    </citation>
    <scope>NUCLEOTIDE SEQUENCE [LARGE SCALE GENOMIC DNA]</scope>
    <source>
        <strain>ATCC 39315 / El Tor Inaba N16961</strain>
    </source>
</reference>
<proteinExistence type="inferred from homology"/>
<keyword id="KW-0963">Cytoplasm</keyword>
<keyword id="KW-0328">Glycosyltransferase</keyword>
<keyword id="KW-0660">Purine salvage</keyword>
<keyword id="KW-1185">Reference proteome</keyword>
<keyword id="KW-0808">Transferase</keyword>
<dbReference type="EC" id="2.4.2.7" evidence="1"/>
<dbReference type="EMBL" id="AE003852">
    <property type="protein sequence ID" value="AAF94212.1"/>
    <property type="molecule type" value="Genomic_DNA"/>
</dbReference>
<dbReference type="PIR" id="G82246">
    <property type="entry name" value="G82246"/>
</dbReference>
<dbReference type="RefSeq" id="NP_230698.1">
    <property type="nucleotide sequence ID" value="NC_002505.1"/>
</dbReference>
<dbReference type="RefSeq" id="WP_000206218.1">
    <property type="nucleotide sequence ID" value="NZ_LT906614.1"/>
</dbReference>
<dbReference type="SMR" id="Q9KT52"/>
<dbReference type="STRING" id="243277.VC_1053"/>
<dbReference type="DNASU" id="2614323"/>
<dbReference type="EnsemblBacteria" id="AAF94212">
    <property type="protein sequence ID" value="AAF94212"/>
    <property type="gene ID" value="VC_1053"/>
</dbReference>
<dbReference type="KEGG" id="vch:VC_1053"/>
<dbReference type="PATRIC" id="fig|243277.26.peg.1005"/>
<dbReference type="eggNOG" id="COG0503">
    <property type="taxonomic scope" value="Bacteria"/>
</dbReference>
<dbReference type="HOGENOM" id="CLU_063339_3_0_6"/>
<dbReference type="UniPathway" id="UPA00588">
    <property type="reaction ID" value="UER00646"/>
</dbReference>
<dbReference type="Proteomes" id="UP000000584">
    <property type="component" value="Chromosome 1"/>
</dbReference>
<dbReference type="GO" id="GO:0005737">
    <property type="term" value="C:cytoplasm"/>
    <property type="evidence" value="ECO:0000318"/>
    <property type="project" value="GO_Central"/>
</dbReference>
<dbReference type="GO" id="GO:0002055">
    <property type="term" value="F:adenine binding"/>
    <property type="evidence" value="ECO:0000318"/>
    <property type="project" value="GO_Central"/>
</dbReference>
<dbReference type="GO" id="GO:0003999">
    <property type="term" value="F:adenine phosphoribosyltransferase activity"/>
    <property type="evidence" value="ECO:0000318"/>
    <property type="project" value="GO_Central"/>
</dbReference>
<dbReference type="GO" id="GO:0016208">
    <property type="term" value="F:AMP binding"/>
    <property type="evidence" value="ECO:0000318"/>
    <property type="project" value="GO_Central"/>
</dbReference>
<dbReference type="GO" id="GO:0006168">
    <property type="term" value="P:adenine salvage"/>
    <property type="evidence" value="ECO:0000318"/>
    <property type="project" value="GO_Central"/>
</dbReference>
<dbReference type="GO" id="GO:0044209">
    <property type="term" value="P:AMP salvage"/>
    <property type="evidence" value="ECO:0000318"/>
    <property type="project" value="GO_Central"/>
</dbReference>
<dbReference type="GO" id="GO:0006166">
    <property type="term" value="P:purine ribonucleoside salvage"/>
    <property type="evidence" value="ECO:0007669"/>
    <property type="project" value="UniProtKB-KW"/>
</dbReference>
<dbReference type="CDD" id="cd06223">
    <property type="entry name" value="PRTases_typeI"/>
    <property type="match status" value="1"/>
</dbReference>
<dbReference type="FunFam" id="3.40.50.2020:FF:000004">
    <property type="entry name" value="Adenine phosphoribosyltransferase"/>
    <property type="match status" value="1"/>
</dbReference>
<dbReference type="Gene3D" id="3.40.50.2020">
    <property type="match status" value="1"/>
</dbReference>
<dbReference type="HAMAP" id="MF_00004">
    <property type="entry name" value="Aden_phosphoribosyltr"/>
    <property type="match status" value="1"/>
</dbReference>
<dbReference type="InterPro" id="IPR005764">
    <property type="entry name" value="Ade_phspho_trans"/>
</dbReference>
<dbReference type="InterPro" id="IPR000836">
    <property type="entry name" value="PRibTrfase_dom"/>
</dbReference>
<dbReference type="InterPro" id="IPR029057">
    <property type="entry name" value="PRTase-like"/>
</dbReference>
<dbReference type="InterPro" id="IPR050054">
    <property type="entry name" value="UPRTase/APRTase"/>
</dbReference>
<dbReference type="NCBIfam" id="TIGR01090">
    <property type="entry name" value="apt"/>
    <property type="match status" value="1"/>
</dbReference>
<dbReference type="NCBIfam" id="NF002632">
    <property type="entry name" value="PRK02304.1-1"/>
    <property type="match status" value="1"/>
</dbReference>
<dbReference type="NCBIfam" id="NF002633">
    <property type="entry name" value="PRK02304.1-2"/>
    <property type="match status" value="1"/>
</dbReference>
<dbReference type="NCBIfam" id="NF002634">
    <property type="entry name" value="PRK02304.1-3"/>
    <property type="match status" value="1"/>
</dbReference>
<dbReference type="NCBIfam" id="NF002636">
    <property type="entry name" value="PRK02304.1-5"/>
    <property type="match status" value="1"/>
</dbReference>
<dbReference type="PANTHER" id="PTHR32315">
    <property type="entry name" value="ADENINE PHOSPHORIBOSYLTRANSFERASE"/>
    <property type="match status" value="1"/>
</dbReference>
<dbReference type="PANTHER" id="PTHR32315:SF3">
    <property type="entry name" value="ADENINE PHOSPHORIBOSYLTRANSFERASE"/>
    <property type="match status" value="1"/>
</dbReference>
<dbReference type="Pfam" id="PF00156">
    <property type="entry name" value="Pribosyltran"/>
    <property type="match status" value="1"/>
</dbReference>
<dbReference type="SUPFAM" id="SSF53271">
    <property type="entry name" value="PRTase-like"/>
    <property type="match status" value="1"/>
</dbReference>
<dbReference type="PROSITE" id="PS00103">
    <property type="entry name" value="PUR_PYR_PR_TRANSFER"/>
    <property type="match status" value="1"/>
</dbReference>
<feature type="chain" id="PRO_0000149483" description="Adenine phosphoribosyltransferase">
    <location>
        <begin position="1"/>
        <end position="181"/>
    </location>
</feature>
<evidence type="ECO:0000255" key="1">
    <source>
        <dbReference type="HAMAP-Rule" id="MF_00004"/>
    </source>
</evidence>